<organism>
    <name type="scientific">Aspergillus fumigatus (strain ATCC MYA-4609 / CBS 101355 / FGSC A1100 / Af293)</name>
    <name type="common">Neosartorya fumigata</name>
    <dbReference type="NCBI Taxonomy" id="330879"/>
    <lineage>
        <taxon>Eukaryota</taxon>
        <taxon>Fungi</taxon>
        <taxon>Dikarya</taxon>
        <taxon>Ascomycota</taxon>
        <taxon>Pezizomycotina</taxon>
        <taxon>Eurotiomycetes</taxon>
        <taxon>Eurotiomycetidae</taxon>
        <taxon>Eurotiales</taxon>
        <taxon>Aspergillaceae</taxon>
        <taxon>Aspergillus</taxon>
        <taxon>Aspergillus subgen. Fumigati</taxon>
    </lineage>
</organism>
<accession>Q4WD47</accession>
<reference key="1">
    <citation type="journal article" date="2005" name="Nature">
        <title>Genomic sequence of the pathogenic and allergenic filamentous fungus Aspergillus fumigatus.</title>
        <authorList>
            <person name="Nierman W.C."/>
            <person name="Pain A."/>
            <person name="Anderson M.J."/>
            <person name="Wortman J.R."/>
            <person name="Kim H.S."/>
            <person name="Arroyo J."/>
            <person name="Berriman M."/>
            <person name="Abe K."/>
            <person name="Archer D.B."/>
            <person name="Bermejo C."/>
            <person name="Bennett J.W."/>
            <person name="Bowyer P."/>
            <person name="Chen D."/>
            <person name="Collins M."/>
            <person name="Coulsen R."/>
            <person name="Davies R."/>
            <person name="Dyer P.S."/>
            <person name="Farman M.L."/>
            <person name="Fedorova N."/>
            <person name="Fedorova N.D."/>
            <person name="Feldblyum T.V."/>
            <person name="Fischer R."/>
            <person name="Fosker N."/>
            <person name="Fraser A."/>
            <person name="Garcia J.L."/>
            <person name="Garcia M.J."/>
            <person name="Goble A."/>
            <person name="Goldman G.H."/>
            <person name="Gomi K."/>
            <person name="Griffith-Jones S."/>
            <person name="Gwilliam R."/>
            <person name="Haas B.J."/>
            <person name="Haas H."/>
            <person name="Harris D.E."/>
            <person name="Horiuchi H."/>
            <person name="Huang J."/>
            <person name="Humphray S."/>
            <person name="Jimenez J."/>
            <person name="Keller N."/>
            <person name="Khouri H."/>
            <person name="Kitamoto K."/>
            <person name="Kobayashi T."/>
            <person name="Konzack S."/>
            <person name="Kulkarni R."/>
            <person name="Kumagai T."/>
            <person name="Lafton A."/>
            <person name="Latge J.-P."/>
            <person name="Li W."/>
            <person name="Lord A."/>
            <person name="Lu C."/>
            <person name="Majoros W.H."/>
            <person name="May G.S."/>
            <person name="Miller B.L."/>
            <person name="Mohamoud Y."/>
            <person name="Molina M."/>
            <person name="Monod M."/>
            <person name="Mouyna I."/>
            <person name="Mulligan S."/>
            <person name="Murphy L.D."/>
            <person name="O'Neil S."/>
            <person name="Paulsen I."/>
            <person name="Penalva M.A."/>
            <person name="Pertea M."/>
            <person name="Price C."/>
            <person name="Pritchard B.L."/>
            <person name="Quail M.A."/>
            <person name="Rabbinowitsch E."/>
            <person name="Rawlins N."/>
            <person name="Rajandream M.A."/>
            <person name="Reichard U."/>
            <person name="Renauld H."/>
            <person name="Robson G.D."/>
            <person name="Rodriguez de Cordoba S."/>
            <person name="Rodriguez-Pena J.M."/>
            <person name="Ronning C.M."/>
            <person name="Rutter S."/>
            <person name="Salzberg S.L."/>
            <person name="Sanchez M."/>
            <person name="Sanchez-Ferrero J.C."/>
            <person name="Saunders D."/>
            <person name="Seeger K."/>
            <person name="Squares R."/>
            <person name="Squares S."/>
            <person name="Takeuchi M."/>
            <person name="Tekaia F."/>
            <person name="Turner G."/>
            <person name="Vazquez de Aldana C.R."/>
            <person name="Weidman J."/>
            <person name="White O."/>
            <person name="Woodward J.R."/>
            <person name="Yu J.-H."/>
            <person name="Fraser C.M."/>
            <person name="Galagan J.E."/>
            <person name="Asai K."/>
            <person name="Machida M."/>
            <person name="Hall N."/>
            <person name="Barrell B.G."/>
            <person name="Denning D.W."/>
        </authorList>
    </citation>
    <scope>NUCLEOTIDE SEQUENCE [LARGE SCALE GENOMIC DNA]</scope>
    <source>
        <strain>ATCC MYA-4609 / CBS 101355 / FGSC A1100 / Af293</strain>
    </source>
</reference>
<reference key="2">
    <citation type="journal article" date="2015" name="Mol. Microbiol.">
        <title>Transcriptome analysis of cyclic AMP-dependent protein kinase A-regulated genes reveals the production of the novel natural compound fumipyrrole by Aspergillus fumigatus.</title>
        <authorList>
            <person name="Macheleidt J."/>
            <person name="Scherlach K."/>
            <person name="Neuwirth T."/>
            <person name="Schmidt-Heck W."/>
            <person name="Strassburger M."/>
            <person name="Spraker J."/>
            <person name="Baccile J.A."/>
            <person name="Schroeder F.C."/>
            <person name="Keller N.P."/>
            <person name="Hertweck C."/>
            <person name="Heinekamp T."/>
            <person name="Brakhage A.A."/>
        </authorList>
    </citation>
    <scope>FUNCTION</scope>
    <scope>DISRUPTION PHENOTYPE</scope>
    <scope>INDUCTION</scope>
    <scope>PATHWAY</scope>
</reference>
<reference key="3">
    <citation type="journal article" date="2016" name="Nat. Chem. Biol.">
        <title>Plant-like biosynthesis of isoquinoline alkaloids in Aspergillus fumigatus.</title>
        <authorList>
            <person name="Baccile J.A."/>
            <person name="Spraker J.E."/>
            <person name="Le H.H."/>
            <person name="Brandenburger E."/>
            <person name="Gomez C."/>
            <person name="Bok J.W."/>
            <person name="Macheleidt J."/>
            <person name="Brakhage A.A."/>
            <person name="Hoffmeister D."/>
            <person name="Keller N.P."/>
            <person name="Schroeder F.C."/>
        </authorList>
    </citation>
    <scope>FUNCTION</scope>
    <scope>DOMAIN</scope>
    <scope>DISRUPTION PHENOTYPE</scope>
</reference>
<reference key="4">
    <citation type="journal article" date="2018" name="J. Biol. Chem.">
        <title>Oxidative cyclization of N-methyl-dopa by a fungal flavoenzyme of the amine oxidase family.</title>
        <authorList>
            <person name="Lahham M."/>
            <person name="Pavkov-Keller T."/>
            <person name="Fuchs M."/>
            <person name="Niederhauser J."/>
            <person name="Chalhoub G."/>
            <person name="Daniel B."/>
            <person name="Kroutil W."/>
            <person name="Gruber K."/>
            <person name="Macheroux P."/>
        </authorList>
    </citation>
    <scope>FUNCTION</scope>
</reference>
<keyword id="KW-0436">Ligase</keyword>
<keyword id="KW-0596">Phosphopantetheine</keyword>
<keyword id="KW-0597">Phosphoprotein</keyword>
<keyword id="KW-1185">Reference proteome</keyword>
<protein>
    <recommendedName>
        <fullName evidence="7">Nonribosomal peptide synthetase-like enzyme fsqF</fullName>
        <ecNumber evidence="10">6.3.2.-</ecNumber>
    </recommendedName>
    <alternativeName>
        <fullName evidence="7">Fumipyrrole biosynthesis protein E</fullName>
    </alternativeName>
    <alternativeName>
        <fullName evidence="8">Fumisoquins biosynthesis protein F</fullName>
    </alternativeName>
</protein>
<proteinExistence type="evidence at transcript level"/>
<sequence length="1480" mass="163306">MLLQDVHHREQLDDDVENAFSKINGTARQASPFADEPSIDVPSTHLPVVTPRSKTANDRTGLAKSLPYASLGASRSTIDEQDVLIQTWAILLHQYAVSDTVAFAIIGKSDPSGYSGRRASTQVVCLPHLFLDSARATPHAPAVHGWDGRLTYAELDQLSNSVARQLLRRGVRKGQFVPFSFEKSIWMVVAIIGILRAGGVVASIDPSQPQSRAREIIQETGATVIVASTAQASVFAGLVDTVVPIADDTVHPAANDTGLHPSLPPVHPEDPAVVIFTSGSTGKPKGIVIQHGAVTTRMVAEGRAFQYHGARTLQFAASTWDIFMTDIFTTLAFNGCVCIPSEEDRRFNLARFCAEYDVSLALITPSLANLLEPTGFPTLKTLIFGGEALKEEVTRKWEAVDGISLHQGYGPAETGPCVAGRLAERPEILGYALDNSVCVLVDPSNPNRLVPLGAVGELVVGGPSLLREYINDPRKTEAAVIENPPWALDLMTPVRRFYRTGDLLRYSVDTLDGRLEFVGRTDDQVKYHGQRIELGEIEHHLSRLPGVEACVVVLAKAGFFKDRLVAVVQAGKSSGGSSYGTQLSLRSDPNITITHMRRFLSSRLPEFMIPNELLVVQELPHNNSMKLDRGRVAKWVADMQSQPSEAVPKPHTRGNELLAHESTARTIAREYARIVAGDSVARRREYEDRDFNLQEGGIDSIQIMSLSMFLTEHFGFQVPMADILSSRATVRSIASLIDANSSPGRGQPLNTQETARLPLRSNGPAPSQQALERNGSRVFLTGASGFLGIEILRQLLARPKTHVYALVRGSSESQARERLVQKAISAGWWQDAYRTRLHVWHGDLTQPQLGLSQLQWQMLQGKASPSIDAIIHNGAKVHYSQDYETLKKTNVSPTVELLKAVHDREEPLHSFVFVSGGQQLSFDDREDEKNAAKSLKGSGYARSKAVSEQIVRRFANQKGSKARHVRIVKPGFIIGDAERGLANQSDFIWRLIAACVELGFYNGDEADSWLFISDITRVAQVILHSVFEDDSQPVTKVLDGLRFKTLWALLQDKFGFELQPLSRREWLARLKHSVATKKEKHVLLREQFPALHHGVVPFNNAAGTVVHREAAESTHRYMTSFPYELGRDDPASAAKTQRLQDRFAELAAFMNADPDEIAFGQSTTFLLRSLGQALKPLLNSDCEIIVSILCHEGSAAAWVALAKDLGIAIKWWAPPPGDDPVLSLDTLRPLLTPKTRLVACNHVSNVVGTIHPIRQVADLVHRIPGAVLVVDGVAWAPHRPIDVKALDVDFYCFSWYKVFGPHVAQLYGRRSAQKRALAGISHFFLSEMPGLDWRLRLGANSFELEEALVPITRYLKRVGWDNIIAQETVLQDVFLAYLRRRPRVFRIFGEQSSDPAKRVPVITFEVIGHSSTVVANKVNQRGRFRVVSGNCWAPRPTHDVLGLGADGLIRVSFVHYNTVAEVQEFCTELDSVLETLNAGI</sequence>
<name>FSQF_ASPFU</name>
<gene>
    <name evidence="8" type="primary">fsqF</name>
    <name evidence="7" type="synonym">fmpE</name>
    <name type="ORF">AFUA_6G03480</name>
</gene>
<feature type="chain" id="PRO_0000438873" description="Nonribosomal peptide synthetase-like enzyme fsqF">
    <location>
        <begin position="1"/>
        <end position="1480"/>
    </location>
</feature>
<feature type="domain" description="Carrier" evidence="2">
    <location>
        <begin position="662"/>
        <end position="741"/>
    </location>
</feature>
<feature type="region of interest" description="Disordered" evidence="3">
    <location>
        <begin position="31"/>
        <end position="59"/>
    </location>
</feature>
<feature type="region of interest" description="Adenylation domain" evidence="1">
    <location>
        <begin position="132"/>
        <end position="527"/>
    </location>
</feature>
<feature type="region of interest" description="Disordered" evidence="3">
    <location>
        <begin position="739"/>
        <end position="773"/>
    </location>
</feature>
<feature type="region of interest" description="NAD-binding domain" evidence="1">
    <location>
        <begin position="780"/>
        <end position="1003"/>
    </location>
</feature>
<feature type="region of interest" description="Aminotransferase domain" evidence="1">
    <location>
        <begin position="1100"/>
        <end position="1465"/>
    </location>
</feature>
<feature type="compositionally biased region" description="Polar residues" evidence="3">
    <location>
        <begin position="739"/>
        <end position="754"/>
    </location>
</feature>
<feature type="modified residue" description="O-(pantetheine 4'-phosphoryl)serine" evidence="2">
    <location>
        <position position="700"/>
    </location>
</feature>
<comment type="function">
    <text evidence="4 5 6 10">Nonribosomal peptide synthetase-like enzyme; part of the gene cluster that mediates the biosynthesis of the isoquinoline alkaloids fumisoquin A, fumisoquin B and fumisoquin C; as well as small amounts of fumipyrrole as a shunt metabolite (PubMed:25582336, PubMed:27065235). The products of the cluster lead to a brown coloration and are important for growth and conidiation (PubMed:25582336). The nonribosomal peptide synthetase-like protein fsqF, which lacks a canonical condensation domain, is required for addition of a serine-derived dehydroalanine moiety to activated tyrosine but is not essential for the subsequent steps leading to isoquinoline formation (PubMed:27065235). A different enzyme, most likely the ATP-grasp enzyme fsqD, is responsible for activation of tyrosine (Probable). Three additional enzymes encoded by the fsq cluster, the N-methyltransferase fsqC, the phenol 2-monooxygenase fsqG and the FAD-dependent oxidase fsqB, catalyze the formation of the isoquinoline ring system in the fumisoquins (PubMed:27065235, PubMed:30194285). FsqB converts the fspF thiolation domain-bound (2S,4S,5S)-2-amino-6-(3,4-dihydroxyphenyl)-4-hydroxy-5-(methylamino)hexanoyl into isoquinoline (PubMed:27065235, PubMed:30194285). The cyclization most likely proceeds via a two-step mechanism, beginning with FAD-dependent oxidation of the methyl group to an iminium species followed by electrophilic attack on the deprotonated phenol (Probable).</text>
</comment>
<comment type="pathway">
    <text evidence="4">Secondary metabolite biosynthesis.</text>
</comment>
<comment type="induction">
    <text evidence="4 5">Expression is positively regulated by the fumisoquins biosynthesis specific transcription factor fsqA (PubMed:25582336).</text>
</comment>
<comment type="domain">
    <text evidence="10">FsqF lacks the condensation domain that is essential for canonical peptide bond formation, and bioinformatic analysis of the vicinity of fsqF did not reveal any genes that could code for a second NRPS or free-standing condensation domain.</text>
</comment>
<comment type="disruption phenotype">
    <text evidence="4 5">Prevents the production of fumipyrrole and leads to reduced growth and sporulation, but does not affect virulence in infected mice (PubMed:25582336). Abolishes completely the production of isoquinolines as well as of pyrroles and leads to the production of a single brightly red shunt metabolite, the anthranilic acid-substituted isoquinoline (PubMed:27065235).</text>
</comment>
<comment type="similarity">
    <text evidence="9">Belongs to the NRP synthetase family.</text>
</comment>
<evidence type="ECO:0000255" key="1"/>
<evidence type="ECO:0000255" key="2">
    <source>
        <dbReference type="PROSITE-ProRule" id="PRU00258"/>
    </source>
</evidence>
<evidence type="ECO:0000256" key="3">
    <source>
        <dbReference type="SAM" id="MobiDB-lite"/>
    </source>
</evidence>
<evidence type="ECO:0000269" key="4">
    <source>
    </source>
</evidence>
<evidence type="ECO:0000269" key="5">
    <source>
    </source>
</evidence>
<evidence type="ECO:0000269" key="6">
    <source>
    </source>
</evidence>
<evidence type="ECO:0000303" key="7">
    <source>
    </source>
</evidence>
<evidence type="ECO:0000303" key="8">
    <source>
    </source>
</evidence>
<evidence type="ECO:0000305" key="9"/>
<evidence type="ECO:0000305" key="10">
    <source>
    </source>
</evidence>
<dbReference type="EC" id="6.3.2.-" evidence="10"/>
<dbReference type="EMBL" id="AAHF01000012">
    <property type="protein sequence ID" value="EAL85691.1"/>
    <property type="molecule type" value="Genomic_DNA"/>
</dbReference>
<dbReference type="RefSeq" id="XP_747729.1">
    <property type="nucleotide sequence ID" value="XM_742636.1"/>
</dbReference>
<dbReference type="SMR" id="Q4WD47"/>
<dbReference type="STRING" id="330879.Q4WD47"/>
<dbReference type="EnsemblFungi" id="EAL85691">
    <property type="protein sequence ID" value="EAL85691"/>
    <property type="gene ID" value="AFUA_6G03480"/>
</dbReference>
<dbReference type="GeneID" id="3505176"/>
<dbReference type="KEGG" id="afm:AFUA_6G03480"/>
<dbReference type="eggNOG" id="KOG1178">
    <property type="taxonomic scope" value="Eukaryota"/>
</dbReference>
<dbReference type="eggNOG" id="KOG1549">
    <property type="taxonomic scope" value="Eukaryota"/>
</dbReference>
<dbReference type="HOGENOM" id="CLU_000022_60_8_1"/>
<dbReference type="InParanoid" id="Q4WD47"/>
<dbReference type="OMA" id="GIAIKWW"/>
<dbReference type="OrthoDB" id="416786at2759"/>
<dbReference type="Proteomes" id="UP000002530">
    <property type="component" value="Chromosome 6"/>
</dbReference>
<dbReference type="GO" id="GO:0016874">
    <property type="term" value="F:ligase activity"/>
    <property type="evidence" value="ECO:0007669"/>
    <property type="project" value="UniProtKB-KW"/>
</dbReference>
<dbReference type="CDD" id="cd05918">
    <property type="entry name" value="A_NRPS_SidN3_like"/>
    <property type="match status" value="1"/>
</dbReference>
<dbReference type="Gene3D" id="3.30.300.30">
    <property type="match status" value="1"/>
</dbReference>
<dbReference type="Gene3D" id="1.10.1200.10">
    <property type="entry name" value="ACP-like"/>
    <property type="match status" value="1"/>
</dbReference>
<dbReference type="Gene3D" id="3.90.1150.10">
    <property type="entry name" value="Aspartate Aminotransferase, domain 1"/>
    <property type="match status" value="1"/>
</dbReference>
<dbReference type="Gene3D" id="3.40.50.12780">
    <property type="entry name" value="N-terminal domain of ligase-like"/>
    <property type="match status" value="1"/>
</dbReference>
<dbReference type="Gene3D" id="3.40.50.720">
    <property type="entry name" value="NAD(P)-binding Rossmann-like Domain"/>
    <property type="match status" value="1"/>
</dbReference>
<dbReference type="Gene3D" id="3.40.640.10">
    <property type="entry name" value="Type I PLP-dependent aspartate aminotransferase-like (Major domain)"/>
    <property type="match status" value="1"/>
</dbReference>
<dbReference type="InterPro" id="IPR010071">
    <property type="entry name" value="AA_adenyl_dom"/>
</dbReference>
<dbReference type="InterPro" id="IPR036736">
    <property type="entry name" value="ACP-like_sf"/>
</dbReference>
<dbReference type="InterPro" id="IPR000192">
    <property type="entry name" value="Aminotrans_V_dom"/>
</dbReference>
<dbReference type="InterPro" id="IPR045851">
    <property type="entry name" value="AMP-bd_C_sf"/>
</dbReference>
<dbReference type="InterPro" id="IPR020845">
    <property type="entry name" value="AMP-binding_CS"/>
</dbReference>
<dbReference type="InterPro" id="IPR000873">
    <property type="entry name" value="AMP-dep_synth/lig_dom"/>
</dbReference>
<dbReference type="InterPro" id="IPR042099">
    <property type="entry name" value="ANL_N_sf"/>
</dbReference>
<dbReference type="InterPro" id="IPR013120">
    <property type="entry name" value="Far_NAD-bd"/>
</dbReference>
<dbReference type="InterPro" id="IPR036291">
    <property type="entry name" value="NAD(P)-bd_dom_sf"/>
</dbReference>
<dbReference type="InterPro" id="IPR009081">
    <property type="entry name" value="PP-bd_ACP"/>
</dbReference>
<dbReference type="InterPro" id="IPR015424">
    <property type="entry name" value="PyrdxlP-dep_Trfase"/>
</dbReference>
<dbReference type="InterPro" id="IPR015421">
    <property type="entry name" value="PyrdxlP-dep_Trfase_major"/>
</dbReference>
<dbReference type="InterPro" id="IPR015422">
    <property type="entry name" value="PyrdxlP-dep_Trfase_small"/>
</dbReference>
<dbReference type="InterPro" id="IPR010080">
    <property type="entry name" value="Thioester_reductase-like_dom"/>
</dbReference>
<dbReference type="NCBIfam" id="TIGR01733">
    <property type="entry name" value="AA-adenyl-dom"/>
    <property type="match status" value="1"/>
</dbReference>
<dbReference type="NCBIfam" id="TIGR01746">
    <property type="entry name" value="Thioester-redct"/>
    <property type="match status" value="1"/>
</dbReference>
<dbReference type="PANTHER" id="PTHR44845">
    <property type="entry name" value="CARRIER DOMAIN-CONTAINING PROTEIN"/>
    <property type="match status" value="1"/>
</dbReference>
<dbReference type="PANTHER" id="PTHR44845:SF4">
    <property type="entry name" value="NONRIBOSOMAL PEPTIDE SYNTHASE INPA"/>
    <property type="match status" value="1"/>
</dbReference>
<dbReference type="Pfam" id="PF00266">
    <property type="entry name" value="Aminotran_5"/>
    <property type="match status" value="1"/>
</dbReference>
<dbReference type="Pfam" id="PF00501">
    <property type="entry name" value="AMP-binding"/>
    <property type="match status" value="1"/>
</dbReference>
<dbReference type="Pfam" id="PF07993">
    <property type="entry name" value="NAD_binding_4"/>
    <property type="match status" value="1"/>
</dbReference>
<dbReference type="Pfam" id="PF00550">
    <property type="entry name" value="PP-binding"/>
    <property type="match status" value="1"/>
</dbReference>
<dbReference type="SUPFAM" id="SSF56801">
    <property type="entry name" value="Acetyl-CoA synthetase-like"/>
    <property type="match status" value="1"/>
</dbReference>
<dbReference type="SUPFAM" id="SSF47336">
    <property type="entry name" value="ACP-like"/>
    <property type="match status" value="1"/>
</dbReference>
<dbReference type="SUPFAM" id="SSF51735">
    <property type="entry name" value="NAD(P)-binding Rossmann-fold domains"/>
    <property type="match status" value="1"/>
</dbReference>
<dbReference type="SUPFAM" id="SSF53383">
    <property type="entry name" value="PLP-dependent transferases"/>
    <property type="match status" value="1"/>
</dbReference>
<dbReference type="PROSITE" id="PS00455">
    <property type="entry name" value="AMP_BINDING"/>
    <property type="match status" value="1"/>
</dbReference>
<dbReference type="PROSITE" id="PS50075">
    <property type="entry name" value="CARRIER"/>
    <property type="match status" value="1"/>
</dbReference>